<sequence>MENGRNWRNRELRQHVKVIDGTVSPTLLLKNATYLNVHTKQWLEANIWIYKDRIIYVGEKLPNQSQETEVYDCEGRFVVPGYIEPHAHPFQLANPEITAMHAAKTGTTTLVNDNLTWYLLTNKKKAFSIIDQFNKLPISMFWWSRYDSQTTLQEENHFINTNDVLDWINHPSVVQGGELTDWPSLLAGDDRLLYWIQETKRNGKPIEGHLPGASLRTLTKMKLLGISADHEAMTGKDVMNRLQLGYMVGLRYSPIRPDLPAILEELLESGLTTFDQLTFTMDGPTPYFMKDGVINTCIQIAIDKGIPLEDAYRMGSFHAAKHLRMDEELGSIAPGRIAHINILQEKENPNPIGVLAKGEWIVKETKEIDIPSIIDWSKYEINEMNIDWNLTEDDLQFSVPVGMDVVNDVIIKPYTIDSDVSFEELNEEKGEQFILLIDRKGKWRVNTIIRGFAPKLGALISSYSASGDIIIIGNSKKDIFIAWNRLKEIKGGIILVNNGEILTEIPLTLGGSLPNEPMEQMIKYDKQLKDTLQKYGFAFYDPVYSLLFLSAFHLPFFRITQKGLLDVKNRDILFPATMR</sequence>
<keyword id="KW-0378">Hydrolase</keyword>
<keyword id="KW-1185">Reference proteome</keyword>
<organism>
    <name type="scientific">Oceanobacillus iheyensis (strain DSM 14371 / CIP 107618 / JCM 11309 / KCTC 3954 / HTE831)</name>
    <dbReference type="NCBI Taxonomy" id="221109"/>
    <lineage>
        <taxon>Bacteria</taxon>
        <taxon>Bacillati</taxon>
        <taxon>Bacillota</taxon>
        <taxon>Bacilli</taxon>
        <taxon>Bacillales</taxon>
        <taxon>Bacillaceae</taxon>
        <taxon>Oceanobacillus</taxon>
    </lineage>
</organism>
<accession>Q8ES91</accession>
<name>Y751_OCEIH</name>
<protein>
    <recommendedName>
        <fullName>Putative adenine deaminase OB0751</fullName>
        <shortName>Adenase</shortName>
        <shortName>Adenine aminase</shortName>
        <ecNumber>3.5.4.2</ecNumber>
    </recommendedName>
</protein>
<feature type="chain" id="PRO_0000142448" description="Putative adenine deaminase OB0751">
    <location>
        <begin position="1"/>
        <end position="579"/>
    </location>
</feature>
<evidence type="ECO:0000305" key="1"/>
<dbReference type="EC" id="3.5.4.2"/>
<dbReference type="EMBL" id="BA000028">
    <property type="protein sequence ID" value="BAC12707.1"/>
    <property type="molecule type" value="Genomic_DNA"/>
</dbReference>
<dbReference type="RefSeq" id="WP_011065159.1">
    <property type="nucleotide sequence ID" value="NC_004193.1"/>
</dbReference>
<dbReference type="SMR" id="Q8ES91"/>
<dbReference type="STRING" id="221109.gene:10732972"/>
<dbReference type="KEGG" id="oih:OB0751"/>
<dbReference type="eggNOG" id="COG1001">
    <property type="taxonomic scope" value="Bacteria"/>
</dbReference>
<dbReference type="HOGENOM" id="CLU_027935_0_0_9"/>
<dbReference type="OrthoDB" id="9775607at2"/>
<dbReference type="PhylomeDB" id="Q8ES91"/>
<dbReference type="Proteomes" id="UP000000822">
    <property type="component" value="Chromosome"/>
</dbReference>
<dbReference type="GO" id="GO:0000034">
    <property type="term" value="F:adenine deaminase activity"/>
    <property type="evidence" value="ECO:0007669"/>
    <property type="project" value="UniProtKB-EC"/>
</dbReference>
<dbReference type="GO" id="GO:0006146">
    <property type="term" value="P:adenine catabolic process"/>
    <property type="evidence" value="ECO:0007669"/>
    <property type="project" value="InterPro"/>
</dbReference>
<dbReference type="CDD" id="cd01295">
    <property type="entry name" value="AdeC"/>
    <property type="match status" value="1"/>
</dbReference>
<dbReference type="Gene3D" id="3.20.20.140">
    <property type="entry name" value="Metal-dependent hydrolases"/>
    <property type="match status" value="1"/>
</dbReference>
<dbReference type="Gene3D" id="2.30.40.10">
    <property type="entry name" value="Urease, subunit C, domain 1"/>
    <property type="match status" value="1"/>
</dbReference>
<dbReference type="InterPro" id="IPR006679">
    <property type="entry name" value="Adenine_deam"/>
</dbReference>
<dbReference type="InterPro" id="IPR026912">
    <property type="entry name" value="Adenine_deam_C"/>
</dbReference>
<dbReference type="InterPro" id="IPR006680">
    <property type="entry name" value="Amidohydro-rel"/>
</dbReference>
<dbReference type="InterPro" id="IPR011059">
    <property type="entry name" value="Metal-dep_hydrolase_composite"/>
</dbReference>
<dbReference type="InterPro" id="IPR032466">
    <property type="entry name" value="Metal_Hydrolase"/>
</dbReference>
<dbReference type="PANTHER" id="PTHR11113:SF6">
    <property type="entry name" value="ADENINE DEAMINASE YERA-RELATED"/>
    <property type="match status" value="1"/>
</dbReference>
<dbReference type="PANTHER" id="PTHR11113">
    <property type="entry name" value="N-ACETYLGLUCOSAMINE-6-PHOSPHATE DEACETYLASE"/>
    <property type="match status" value="1"/>
</dbReference>
<dbReference type="Pfam" id="PF13382">
    <property type="entry name" value="Adenine_deam_C"/>
    <property type="match status" value="1"/>
</dbReference>
<dbReference type="Pfam" id="PF01979">
    <property type="entry name" value="Amidohydro_1"/>
    <property type="match status" value="1"/>
</dbReference>
<dbReference type="SUPFAM" id="SSF51338">
    <property type="entry name" value="Composite domain of metallo-dependent hydrolases"/>
    <property type="match status" value="1"/>
</dbReference>
<dbReference type="SUPFAM" id="SSF51556">
    <property type="entry name" value="Metallo-dependent hydrolases"/>
    <property type="match status" value="1"/>
</dbReference>
<proteinExistence type="inferred from homology"/>
<reference key="1">
    <citation type="journal article" date="2002" name="Nucleic Acids Res.">
        <title>Genome sequence of Oceanobacillus iheyensis isolated from the Iheya Ridge and its unexpected adaptive capabilities to extreme environments.</title>
        <authorList>
            <person name="Takami H."/>
            <person name="Takaki Y."/>
            <person name="Uchiyama I."/>
        </authorList>
    </citation>
    <scope>NUCLEOTIDE SEQUENCE [LARGE SCALE GENOMIC DNA]</scope>
    <source>
        <strain>DSM 14371 / CIP 107618 / JCM 11309 / KCTC 3954 / HTE831</strain>
    </source>
</reference>
<comment type="catalytic activity">
    <reaction>
        <text>adenine + H2O + H(+) = hypoxanthine + NH4(+)</text>
        <dbReference type="Rhea" id="RHEA:23688"/>
        <dbReference type="ChEBI" id="CHEBI:15377"/>
        <dbReference type="ChEBI" id="CHEBI:15378"/>
        <dbReference type="ChEBI" id="CHEBI:16708"/>
        <dbReference type="ChEBI" id="CHEBI:17368"/>
        <dbReference type="ChEBI" id="CHEBI:28938"/>
        <dbReference type="EC" id="3.5.4.2"/>
    </reaction>
</comment>
<comment type="similarity">
    <text evidence="1">Belongs to the metallo-dependent hydrolases superfamily. Adenine deaminase family.</text>
</comment>
<gene>
    <name type="ordered locus">OB0751</name>
</gene>